<comment type="function">
    <text evidence="1">Catalyzes the transfer of a methyl group from 5-methyltetrahydrofolate to homocysteine resulting in methionine formation.</text>
</comment>
<comment type="catalytic activity">
    <reaction evidence="1">
        <text>5-methyltetrahydropteroyltri-L-glutamate + L-homocysteine = tetrahydropteroyltri-L-glutamate + L-methionine</text>
        <dbReference type="Rhea" id="RHEA:21196"/>
        <dbReference type="ChEBI" id="CHEBI:57844"/>
        <dbReference type="ChEBI" id="CHEBI:58140"/>
        <dbReference type="ChEBI" id="CHEBI:58199"/>
        <dbReference type="ChEBI" id="CHEBI:58207"/>
        <dbReference type="EC" id="2.1.1.14"/>
    </reaction>
</comment>
<comment type="cofactor">
    <cofactor evidence="1">
        <name>Zn(2+)</name>
        <dbReference type="ChEBI" id="CHEBI:29105"/>
    </cofactor>
    <text evidence="1">Binds 1 zinc ion per subunit.</text>
</comment>
<comment type="pathway">
    <text evidence="1">Amino-acid biosynthesis; L-methionine biosynthesis via de novo pathway; L-methionine from L-homocysteine (MetE route): step 1/1.</text>
</comment>
<comment type="similarity">
    <text evidence="1">Belongs to the vitamin-B12 independent methionine synthase family.</text>
</comment>
<organism>
    <name type="scientific">Burkholderia cenocepacia (strain HI2424)</name>
    <dbReference type="NCBI Taxonomy" id="331272"/>
    <lineage>
        <taxon>Bacteria</taxon>
        <taxon>Pseudomonadati</taxon>
        <taxon>Pseudomonadota</taxon>
        <taxon>Betaproteobacteria</taxon>
        <taxon>Burkholderiales</taxon>
        <taxon>Burkholderiaceae</taxon>
        <taxon>Burkholderia</taxon>
        <taxon>Burkholderia cepacia complex</taxon>
    </lineage>
</organism>
<keyword id="KW-0028">Amino-acid biosynthesis</keyword>
<keyword id="KW-0479">Metal-binding</keyword>
<keyword id="KW-0486">Methionine biosynthesis</keyword>
<keyword id="KW-0489">Methyltransferase</keyword>
<keyword id="KW-0677">Repeat</keyword>
<keyword id="KW-0808">Transferase</keyword>
<keyword id="KW-0862">Zinc</keyword>
<name>METE_BURCH</name>
<reference key="1">
    <citation type="submission" date="2006-08" db="EMBL/GenBank/DDBJ databases">
        <title>Complete sequence of chromosome 2 of Burkholderia cenocepacia HI2424.</title>
        <authorList>
            <person name="Copeland A."/>
            <person name="Lucas S."/>
            <person name="Lapidus A."/>
            <person name="Barry K."/>
            <person name="Detter J.C."/>
            <person name="Glavina del Rio T."/>
            <person name="Hammon N."/>
            <person name="Israni S."/>
            <person name="Pitluck S."/>
            <person name="Chain P."/>
            <person name="Malfatti S."/>
            <person name="Shin M."/>
            <person name="Vergez L."/>
            <person name="Schmutz J."/>
            <person name="Larimer F."/>
            <person name="Land M."/>
            <person name="Hauser L."/>
            <person name="Kyrpides N."/>
            <person name="Kim E."/>
            <person name="LiPuma J.J."/>
            <person name="Gonzalez C.F."/>
            <person name="Konstantinidis K."/>
            <person name="Tiedje J.M."/>
            <person name="Richardson P."/>
        </authorList>
    </citation>
    <scope>NUCLEOTIDE SEQUENCE [LARGE SCALE GENOMIC DNA]</scope>
    <source>
        <strain>HI2424</strain>
    </source>
</reference>
<sequence length="764" mass="85543">MVTTHNLGFPRIGAKRELKFGLERYWKGESSRDELKALGAELRRRHWHDQRDLDLAPLGDFAFYDQVLDMSFTLGNLPKRVQDFHGDALDNYFRVARGRSAQSAEEHAACCGGVAAGEMTKWFDTNYHYIVPEFHADTNFSLDPSRLLQQLAEANAQGVNAKPVILGPVTYLWLGKAKDVSDRLALLPKLLPVYGALLDTLTAQGVEWVQIDEPILVTELDAEWRQAFRTAYAALETRRIKLLLATYFGQLQDNLTLAASLPVDGLHIDAINARDEVDALVRELPAERVLSVGAINGRNIWKTDLNAALDWLEPLAKQLGDRLWLAPSCSLLHVPVDLASEEKLDAEIRSWLAFALQKLDELKVLATALNEGRDKVADALAANAAAIDSRRRSPRVNNPVVKAAIARIDAQLGNRASPYTQRASKQSARLNLPAFPTTTIGSFPQTAEIRQARSRFRAGALDEAGYRTAMRAEIERSVREQESLELDVLVHGEAERNDMVEYFGEQLDGYAFSQFGWVQSYGSRCVKPPILFGDISRPKAMTVEWIAYAQSLTRKPMKGMLTGPVTILNWSFVRDDQPRAVSCYQLALAIREEVLDLEKAGVRVIQIDEAALREGLPLRRAQWSEYLKWAVESFRITANGVQDDTQIHTHMCYSEFNDIIASIADMDADVITIETSRSDMELLDAFDTFKYPNEIGPGVYDIHSPNIPTQDHIVGLMKKAAERIPAERLWVNPDCGLKTRQWAEVIPALTNMVAAAKTLRNQVQ</sequence>
<gene>
    <name evidence="1" type="primary">metE</name>
    <name type="ordered locus">Bcen2424_5286</name>
</gene>
<dbReference type="EC" id="2.1.1.14" evidence="1"/>
<dbReference type="EMBL" id="CP000459">
    <property type="protein sequence ID" value="ABK12019.1"/>
    <property type="molecule type" value="Genomic_DNA"/>
</dbReference>
<dbReference type="RefSeq" id="WP_011546911.1">
    <property type="nucleotide sequence ID" value="NC_008543.1"/>
</dbReference>
<dbReference type="SMR" id="A0B2Z3"/>
<dbReference type="KEGG" id="bch:Bcen2424_5286"/>
<dbReference type="HOGENOM" id="CLU_013175_0_0_4"/>
<dbReference type="UniPathway" id="UPA00051">
    <property type="reaction ID" value="UER00082"/>
</dbReference>
<dbReference type="GO" id="GO:0003871">
    <property type="term" value="F:5-methyltetrahydropteroyltriglutamate-homocysteine S-methyltransferase activity"/>
    <property type="evidence" value="ECO:0007669"/>
    <property type="project" value="UniProtKB-UniRule"/>
</dbReference>
<dbReference type="GO" id="GO:0008270">
    <property type="term" value="F:zinc ion binding"/>
    <property type="evidence" value="ECO:0007669"/>
    <property type="project" value="InterPro"/>
</dbReference>
<dbReference type="GO" id="GO:0009086">
    <property type="term" value="P:methionine biosynthetic process"/>
    <property type="evidence" value="ECO:0007669"/>
    <property type="project" value="UniProtKB-UniRule"/>
</dbReference>
<dbReference type="GO" id="GO:0032259">
    <property type="term" value="P:methylation"/>
    <property type="evidence" value="ECO:0007669"/>
    <property type="project" value="UniProtKB-KW"/>
</dbReference>
<dbReference type="CDD" id="cd03311">
    <property type="entry name" value="CIMS_C_terminal_like"/>
    <property type="match status" value="1"/>
</dbReference>
<dbReference type="CDD" id="cd03312">
    <property type="entry name" value="CIMS_N_terminal_like"/>
    <property type="match status" value="1"/>
</dbReference>
<dbReference type="FunFam" id="3.20.20.210:FF:000002">
    <property type="entry name" value="5-methyltetrahydropteroyltriglutamate--homocysteine methyltransferase"/>
    <property type="match status" value="1"/>
</dbReference>
<dbReference type="FunFam" id="3.20.20.210:FF:000003">
    <property type="entry name" value="5-methyltetrahydropteroyltriglutamate--homocysteine methyltransferase"/>
    <property type="match status" value="1"/>
</dbReference>
<dbReference type="Gene3D" id="3.20.20.210">
    <property type="match status" value="2"/>
</dbReference>
<dbReference type="HAMAP" id="MF_00172">
    <property type="entry name" value="Meth_synth"/>
    <property type="match status" value="1"/>
</dbReference>
<dbReference type="InterPro" id="IPR013215">
    <property type="entry name" value="Cbl-indep_Met_Synth_N"/>
</dbReference>
<dbReference type="InterPro" id="IPR006276">
    <property type="entry name" value="Cobalamin-indep_Met_synthase"/>
</dbReference>
<dbReference type="InterPro" id="IPR002629">
    <property type="entry name" value="Met_Synth_C/arc"/>
</dbReference>
<dbReference type="InterPro" id="IPR038071">
    <property type="entry name" value="UROD/MetE-like_sf"/>
</dbReference>
<dbReference type="NCBIfam" id="TIGR01371">
    <property type="entry name" value="met_syn_B12ind"/>
    <property type="match status" value="1"/>
</dbReference>
<dbReference type="NCBIfam" id="NF003556">
    <property type="entry name" value="PRK05222.1"/>
    <property type="match status" value="1"/>
</dbReference>
<dbReference type="PANTHER" id="PTHR30519">
    <property type="entry name" value="5-METHYLTETRAHYDROPTEROYLTRIGLUTAMATE--HOMOCYSTEINE METHYLTRANSFERASE"/>
    <property type="match status" value="1"/>
</dbReference>
<dbReference type="Pfam" id="PF08267">
    <property type="entry name" value="Meth_synt_1"/>
    <property type="match status" value="1"/>
</dbReference>
<dbReference type="Pfam" id="PF01717">
    <property type="entry name" value="Meth_synt_2"/>
    <property type="match status" value="1"/>
</dbReference>
<dbReference type="PIRSF" id="PIRSF000382">
    <property type="entry name" value="MeTrfase_B12_ind"/>
    <property type="match status" value="1"/>
</dbReference>
<dbReference type="SUPFAM" id="SSF51726">
    <property type="entry name" value="UROD/MetE-like"/>
    <property type="match status" value="2"/>
</dbReference>
<feature type="chain" id="PRO_1000017230" description="5-methyltetrahydropteroyltriglutamate--homocysteine methyltransferase">
    <location>
        <begin position="1"/>
        <end position="764"/>
    </location>
</feature>
<feature type="active site" description="Proton donor" evidence="1">
    <location>
        <position position="703"/>
    </location>
</feature>
<feature type="binding site" evidence="1">
    <location>
        <begin position="16"/>
        <end position="19"/>
    </location>
    <ligand>
        <name>5-methyltetrahydropteroyltri-L-glutamate</name>
        <dbReference type="ChEBI" id="CHEBI:58207"/>
    </ligand>
</feature>
<feature type="binding site" evidence="1">
    <location>
        <position position="121"/>
    </location>
    <ligand>
        <name>5-methyltetrahydropteroyltri-L-glutamate</name>
        <dbReference type="ChEBI" id="CHEBI:58207"/>
    </ligand>
</feature>
<feature type="binding site" evidence="1">
    <location>
        <begin position="440"/>
        <end position="442"/>
    </location>
    <ligand>
        <name>L-homocysteine</name>
        <dbReference type="ChEBI" id="CHEBI:58199"/>
    </ligand>
</feature>
<feature type="binding site" evidence="1">
    <location>
        <begin position="440"/>
        <end position="442"/>
    </location>
    <ligand>
        <name>L-methionine</name>
        <dbReference type="ChEBI" id="CHEBI:57844"/>
    </ligand>
</feature>
<feature type="binding site" evidence="1">
    <location>
        <position position="493"/>
    </location>
    <ligand>
        <name>L-homocysteine</name>
        <dbReference type="ChEBI" id="CHEBI:58199"/>
    </ligand>
</feature>
<feature type="binding site" evidence="1">
    <location>
        <position position="493"/>
    </location>
    <ligand>
        <name>L-methionine</name>
        <dbReference type="ChEBI" id="CHEBI:57844"/>
    </ligand>
</feature>
<feature type="binding site" evidence="1">
    <location>
        <begin position="524"/>
        <end position="525"/>
    </location>
    <ligand>
        <name>5-methyltetrahydropteroyltri-L-glutamate</name>
        <dbReference type="ChEBI" id="CHEBI:58207"/>
    </ligand>
</feature>
<feature type="binding site" evidence="1">
    <location>
        <position position="570"/>
    </location>
    <ligand>
        <name>5-methyltetrahydropteroyltri-L-glutamate</name>
        <dbReference type="ChEBI" id="CHEBI:58207"/>
    </ligand>
</feature>
<feature type="binding site" evidence="1">
    <location>
        <position position="608"/>
    </location>
    <ligand>
        <name>L-homocysteine</name>
        <dbReference type="ChEBI" id="CHEBI:58199"/>
    </ligand>
</feature>
<feature type="binding site" evidence="1">
    <location>
        <position position="608"/>
    </location>
    <ligand>
        <name>L-methionine</name>
        <dbReference type="ChEBI" id="CHEBI:57844"/>
    </ligand>
</feature>
<feature type="binding site" evidence="1">
    <location>
        <position position="614"/>
    </location>
    <ligand>
        <name>5-methyltetrahydropteroyltri-L-glutamate</name>
        <dbReference type="ChEBI" id="CHEBI:58207"/>
    </ligand>
</feature>
<feature type="binding site" evidence="1">
    <location>
        <position position="650"/>
    </location>
    <ligand>
        <name>Zn(2+)</name>
        <dbReference type="ChEBI" id="CHEBI:29105"/>
        <note>catalytic</note>
    </ligand>
</feature>
<feature type="binding site" evidence="1">
    <location>
        <position position="652"/>
    </location>
    <ligand>
        <name>Zn(2+)</name>
        <dbReference type="ChEBI" id="CHEBI:29105"/>
        <note>catalytic</note>
    </ligand>
</feature>
<feature type="binding site" evidence="1">
    <location>
        <position position="674"/>
    </location>
    <ligand>
        <name>Zn(2+)</name>
        <dbReference type="ChEBI" id="CHEBI:29105"/>
        <note>catalytic</note>
    </ligand>
</feature>
<feature type="binding site" evidence="1">
    <location>
        <position position="735"/>
    </location>
    <ligand>
        <name>Zn(2+)</name>
        <dbReference type="ChEBI" id="CHEBI:29105"/>
        <note>catalytic</note>
    </ligand>
</feature>
<protein>
    <recommendedName>
        <fullName evidence="1">5-methyltetrahydropteroyltriglutamate--homocysteine methyltransferase</fullName>
        <ecNumber evidence="1">2.1.1.14</ecNumber>
    </recommendedName>
    <alternativeName>
        <fullName evidence="1">Cobalamin-independent methionine synthase</fullName>
    </alternativeName>
    <alternativeName>
        <fullName evidence="1">Methionine synthase, vitamin-B12 independent isozyme</fullName>
    </alternativeName>
</protein>
<accession>A0B2Z3</accession>
<evidence type="ECO:0000255" key="1">
    <source>
        <dbReference type="HAMAP-Rule" id="MF_00172"/>
    </source>
</evidence>
<proteinExistence type="inferred from homology"/>